<organism>
    <name type="scientific">Leuconostoc mesenteroides subsp. mesenteroides (strain ATCC 8293 / DSM 20343 / BCRC 11652 / CCM 1803 / JCM 6124 / NCDO 523 / NBRC 100496 / NCIMB 8023 / NCTC 12954 / NRRL B-1118 / 37Y)</name>
    <dbReference type="NCBI Taxonomy" id="203120"/>
    <lineage>
        <taxon>Bacteria</taxon>
        <taxon>Bacillati</taxon>
        <taxon>Bacillota</taxon>
        <taxon>Bacilli</taxon>
        <taxon>Lactobacillales</taxon>
        <taxon>Lactobacillaceae</taxon>
        <taxon>Leuconostoc</taxon>
    </lineage>
</organism>
<feature type="chain" id="PRO_0000341766" description="2-succinyl-5-enolpyruvyl-6-hydroxy-3-cyclohexene-1-carboxylate synthase">
    <location>
        <begin position="1"/>
        <end position="541"/>
    </location>
</feature>
<proteinExistence type="inferred from homology"/>
<evidence type="ECO:0000255" key="1">
    <source>
        <dbReference type="HAMAP-Rule" id="MF_01659"/>
    </source>
</evidence>
<gene>
    <name evidence="1" type="primary">menD</name>
    <name type="ordered locus">LEUM_0752</name>
</gene>
<reference key="1">
    <citation type="journal article" date="2006" name="Proc. Natl. Acad. Sci. U.S.A.">
        <title>Comparative genomics of the lactic acid bacteria.</title>
        <authorList>
            <person name="Makarova K.S."/>
            <person name="Slesarev A."/>
            <person name="Wolf Y.I."/>
            <person name="Sorokin A."/>
            <person name="Mirkin B."/>
            <person name="Koonin E.V."/>
            <person name="Pavlov A."/>
            <person name="Pavlova N."/>
            <person name="Karamychev V."/>
            <person name="Polouchine N."/>
            <person name="Shakhova V."/>
            <person name="Grigoriev I."/>
            <person name="Lou Y."/>
            <person name="Rohksar D."/>
            <person name="Lucas S."/>
            <person name="Huang K."/>
            <person name="Goodstein D.M."/>
            <person name="Hawkins T."/>
            <person name="Plengvidhya V."/>
            <person name="Welker D."/>
            <person name="Hughes J."/>
            <person name="Goh Y."/>
            <person name="Benson A."/>
            <person name="Baldwin K."/>
            <person name="Lee J.-H."/>
            <person name="Diaz-Muniz I."/>
            <person name="Dosti B."/>
            <person name="Smeianov V."/>
            <person name="Wechter W."/>
            <person name="Barabote R."/>
            <person name="Lorca G."/>
            <person name="Altermann E."/>
            <person name="Barrangou R."/>
            <person name="Ganesan B."/>
            <person name="Xie Y."/>
            <person name="Rawsthorne H."/>
            <person name="Tamir D."/>
            <person name="Parker C."/>
            <person name="Breidt F."/>
            <person name="Broadbent J.R."/>
            <person name="Hutkins R."/>
            <person name="O'Sullivan D."/>
            <person name="Steele J."/>
            <person name="Unlu G."/>
            <person name="Saier M.H. Jr."/>
            <person name="Klaenhammer T."/>
            <person name="Richardson P."/>
            <person name="Kozyavkin S."/>
            <person name="Weimer B.C."/>
            <person name="Mills D.A."/>
        </authorList>
    </citation>
    <scope>NUCLEOTIDE SEQUENCE [LARGE SCALE GENOMIC DNA]</scope>
    <source>
        <strain>ATCC 8293 / DSM 20343 / BCRC 11652 / CCM 1803 / JCM 6124 / NCDO 523 / NBRC 100496 / NCIMB 8023 / NCTC 12954 / NRRL B-1118 / 37Y</strain>
    </source>
</reference>
<sequence>MTDTLTFNTKHLLEALFESGIRHFIVSPGSRSTPIALLLAEYAEQNNEIKLFVDVDERSAGFFALGIAKTLLEPVVLLGTSGTAIAEYMPAVAEAYAANIPLVVLSTDRPQELQFNGAPQTIPQSNLFGQLTKQAVLIRLQDMHSDVTEYIDFIVQKVVNLSITAPRGPIQINLPLRKPLMPVLDRQDEVHVQRVVFDKQSVQYRLPPITAKRLLILAGPNVLNSYDDSLKKFAIKNNVPVIADVLSQSRHTYTIHGIDVLLQAHKINADLKPDLVVRFGKTPVSARVLQWLKEENILTWHVDEDAGVDHTRHIVRAIKMAPHDFLESMHLTLSKNQIDFNQKWLSLPKVIKTRNEMNIITALDDAVPDDTHIFVANSMPIRDMDNFFTGNHTQRIYANRGANGIDGVISSALGMSAVVKQRSVLLTGDLTLFHDMNGLMMAKNYQLPLDIIVINNNGGGIFSFLPQAGAPKYFEQLFGTPLNIDIKKIADLYYIDYHQLNVPEALSQILQTPSKTTRLIEYKSDHQRNRDDHREVLEMLK</sequence>
<keyword id="KW-0460">Magnesium</keyword>
<keyword id="KW-0464">Manganese</keyword>
<keyword id="KW-0474">Menaquinone biosynthesis</keyword>
<keyword id="KW-0479">Metal-binding</keyword>
<keyword id="KW-1185">Reference proteome</keyword>
<keyword id="KW-0786">Thiamine pyrophosphate</keyword>
<keyword id="KW-0808">Transferase</keyword>
<name>MEND_LEUMM</name>
<accession>Q03Y61</accession>
<dbReference type="EC" id="2.2.1.9" evidence="1"/>
<dbReference type="EMBL" id="CP000414">
    <property type="protein sequence ID" value="ABJ61861.1"/>
    <property type="molecule type" value="Genomic_DNA"/>
</dbReference>
<dbReference type="RefSeq" id="WP_011679539.1">
    <property type="nucleotide sequence ID" value="NC_008531.1"/>
</dbReference>
<dbReference type="SMR" id="Q03Y61"/>
<dbReference type="EnsemblBacteria" id="ABJ61861">
    <property type="protein sequence ID" value="ABJ61861"/>
    <property type="gene ID" value="LEUM_0752"/>
</dbReference>
<dbReference type="GeneID" id="29577727"/>
<dbReference type="KEGG" id="lme:LEUM_0752"/>
<dbReference type="eggNOG" id="COG1165">
    <property type="taxonomic scope" value="Bacteria"/>
</dbReference>
<dbReference type="HOGENOM" id="CLU_006051_3_0_9"/>
<dbReference type="UniPathway" id="UPA00079"/>
<dbReference type="UniPathway" id="UPA01057">
    <property type="reaction ID" value="UER00164"/>
</dbReference>
<dbReference type="Proteomes" id="UP000000362">
    <property type="component" value="Chromosome"/>
</dbReference>
<dbReference type="GO" id="GO:0070204">
    <property type="term" value="F:2-succinyl-5-enolpyruvyl-6-hydroxy-3-cyclohexene-1-carboxylic-acid synthase activity"/>
    <property type="evidence" value="ECO:0007669"/>
    <property type="project" value="UniProtKB-UniRule"/>
</dbReference>
<dbReference type="GO" id="GO:0000287">
    <property type="term" value="F:magnesium ion binding"/>
    <property type="evidence" value="ECO:0007669"/>
    <property type="project" value="UniProtKB-UniRule"/>
</dbReference>
<dbReference type="GO" id="GO:0030145">
    <property type="term" value="F:manganese ion binding"/>
    <property type="evidence" value="ECO:0007669"/>
    <property type="project" value="UniProtKB-UniRule"/>
</dbReference>
<dbReference type="GO" id="GO:0030976">
    <property type="term" value="F:thiamine pyrophosphate binding"/>
    <property type="evidence" value="ECO:0007669"/>
    <property type="project" value="UniProtKB-UniRule"/>
</dbReference>
<dbReference type="GO" id="GO:0009234">
    <property type="term" value="P:menaquinone biosynthetic process"/>
    <property type="evidence" value="ECO:0007669"/>
    <property type="project" value="UniProtKB-UniRule"/>
</dbReference>
<dbReference type="CDD" id="cd07037">
    <property type="entry name" value="TPP_PYR_MenD"/>
    <property type="match status" value="1"/>
</dbReference>
<dbReference type="CDD" id="cd02009">
    <property type="entry name" value="TPP_SHCHC_synthase"/>
    <property type="match status" value="1"/>
</dbReference>
<dbReference type="Gene3D" id="3.40.50.970">
    <property type="match status" value="2"/>
</dbReference>
<dbReference type="Gene3D" id="3.40.50.1220">
    <property type="entry name" value="TPP-binding domain"/>
    <property type="match status" value="1"/>
</dbReference>
<dbReference type="HAMAP" id="MF_01659">
    <property type="entry name" value="MenD"/>
    <property type="match status" value="1"/>
</dbReference>
<dbReference type="InterPro" id="IPR004433">
    <property type="entry name" value="MenaQ_synth_MenD"/>
</dbReference>
<dbReference type="InterPro" id="IPR032264">
    <property type="entry name" value="MenD_middle"/>
</dbReference>
<dbReference type="InterPro" id="IPR029061">
    <property type="entry name" value="THDP-binding"/>
</dbReference>
<dbReference type="InterPro" id="IPR012001">
    <property type="entry name" value="Thiamin_PyroP_enz_TPP-bd_dom"/>
</dbReference>
<dbReference type="InterPro" id="IPR011766">
    <property type="entry name" value="TPP_enzyme_TPP-bd"/>
</dbReference>
<dbReference type="NCBIfam" id="TIGR00173">
    <property type="entry name" value="menD"/>
    <property type="match status" value="1"/>
</dbReference>
<dbReference type="PANTHER" id="PTHR42916">
    <property type="entry name" value="2-SUCCINYL-5-ENOLPYRUVYL-6-HYDROXY-3-CYCLOHEXENE-1-CARBOXYLATE SYNTHASE"/>
    <property type="match status" value="1"/>
</dbReference>
<dbReference type="PANTHER" id="PTHR42916:SF1">
    <property type="entry name" value="PROTEIN PHYLLO, CHLOROPLASTIC"/>
    <property type="match status" value="1"/>
</dbReference>
<dbReference type="Pfam" id="PF02775">
    <property type="entry name" value="TPP_enzyme_C"/>
    <property type="match status" value="1"/>
</dbReference>
<dbReference type="Pfam" id="PF16582">
    <property type="entry name" value="TPP_enzyme_M_2"/>
    <property type="match status" value="1"/>
</dbReference>
<dbReference type="Pfam" id="PF02776">
    <property type="entry name" value="TPP_enzyme_N"/>
    <property type="match status" value="1"/>
</dbReference>
<dbReference type="PIRSF" id="PIRSF004983">
    <property type="entry name" value="MenD"/>
    <property type="match status" value="1"/>
</dbReference>
<dbReference type="SUPFAM" id="SSF52518">
    <property type="entry name" value="Thiamin diphosphate-binding fold (THDP-binding)"/>
    <property type="match status" value="2"/>
</dbReference>
<comment type="function">
    <text evidence="1">Catalyzes the thiamine diphosphate-dependent decarboxylation of 2-oxoglutarate and the subsequent addition of the resulting succinic semialdehyde-thiamine pyrophosphate anion to isochorismate to yield 2-succinyl-5-enolpyruvyl-6-hydroxy-3-cyclohexene-1-carboxylate (SEPHCHC).</text>
</comment>
<comment type="catalytic activity">
    <reaction evidence="1">
        <text>isochorismate + 2-oxoglutarate + H(+) = 5-enolpyruvoyl-6-hydroxy-2-succinyl-cyclohex-3-ene-1-carboxylate + CO2</text>
        <dbReference type="Rhea" id="RHEA:25593"/>
        <dbReference type="ChEBI" id="CHEBI:15378"/>
        <dbReference type="ChEBI" id="CHEBI:16526"/>
        <dbReference type="ChEBI" id="CHEBI:16810"/>
        <dbReference type="ChEBI" id="CHEBI:29780"/>
        <dbReference type="ChEBI" id="CHEBI:58818"/>
        <dbReference type="EC" id="2.2.1.9"/>
    </reaction>
</comment>
<comment type="cofactor">
    <cofactor evidence="1">
        <name>Mg(2+)</name>
        <dbReference type="ChEBI" id="CHEBI:18420"/>
    </cofactor>
    <cofactor evidence="1">
        <name>Mn(2+)</name>
        <dbReference type="ChEBI" id="CHEBI:29035"/>
    </cofactor>
</comment>
<comment type="cofactor">
    <cofactor evidence="1">
        <name>thiamine diphosphate</name>
        <dbReference type="ChEBI" id="CHEBI:58937"/>
    </cofactor>
    <text evidence="1">Binds 1 thiamine pyrophosphate per subunit.</text>
</comment>
<comment type="pathway">
    <text evidence="1">Quinol/quinone metabolism; 1,4-dihydroxy-2-naphthoate biosynthesis; 1,4-dihydroxy-2-naphthoate from chorismate: step 2/7.</text>
</comment>
<comment type="pathway">
    <text evidence="1">Quinol/quinone metabolism; menaquinone biosynthesis.</text>
</comment>
<comment type="subunit">
    <text evidence="1">Homodimer.</text>
</comment>
<comment type="similarity">
    <text evidence="1">Belongs to the TPP enzyme family. MenD subfamily.</text>
</comment>
<protein>
    <recommendedName>
        <fullName evidence="1">2-succinyl-5-enolpyruvyl-6-hydroxy-3-cyclohexene-1-carboxylate synthase</fullName>
        <shortName evidence="1">SEPHCHC synthase</shortName>
        <ecNumber evidence="1">2.2.1.9</ecNumber>
    </recommendedName>
    <alternativeName>
        <fullName evidence="1">Menaquinone biosynthesis protein MenD</fullName>
    </alternativeName>
</protein>